<protein>
    <recommendedName>
        <fullName evidence="1">tRNA modification GTPase MnmE</fullName>
        <ecNumber evidence="1">3.6.-.-</ecNumber>
    </recommendedName>
</protein>
<accession>Q92KW1</accession>
<comment type="function">
    <text evidence="1">Exhibits a very high intrinsic GTPase hydrolysis rate. Involved in the addition of a carboxymethylaminomethyl (cmnm) group at the wobble position (U34) of certain tRNAs, forming tRNA-cmnm(5)s(2)U34.</text>
</comment>
<comment type="cofactor">
    <cofactor evidence="1">
        <name>K(+)</name>
        <dbReference type="ChEBI" id="CHEBI:29103"/>
    </cofactor>
    <text evidence="1">Binds 1 potassium ion per subunit.</text>
</comment>
<comment type="subunit">
    <text evidence="1">Homodimer. Heterotetramer of two MnmE and two MnmG subunits.</text>
</comment>
<comment type="subcellular location">
    <subcellularLocation>
        <location evidence="1">Cytoplasm</location>
    </subcellularLocation>
</comment>
<comment type="similarity">
    <text evidence="1">Belongs to the TRAFAC class TrmE-Era-EngA-EngB-Septin-like GTPase superfamily. TrmE GTPase family.</text>
</comment>
<dbReference type="EC" id="3.6.-.-" evidence="1"/>
<dbReference type="EMBL" id="AL591688">
    <property type="protein sequence ID" value="CAC47917.2"/>
    <property type="molecule type" value="Genomic_DNA"/>
</dbReference>
<dbReference type="RefSeq" id="NP_387444.2">
    <property type="nucleotide sequence ID" value="NC_003047.1"/>
</dbReference>
<dbReference type="RefSeq" id="WP_010970586.1">
    <property type="nucleotide sequence ID" value="NC_003047.1"/>
</dbReference>
<dbReference type="SMR" id="Q92KW1"/>
<dbReference type="EnsemblBacteria" id="CAC47917">
    <property type="protein sequence ID" value="CAC47917"/>
    <property type="gene ID" value="SMc02797"/>
</dbReference>
<dbReference type="KEGG" id="sme:SMc02797"/>
<dbReference type="PATRIC" id="fig|266834.11.peg.4899"/>
<dbReference type="eggNOG" id="COG0486">
    <property type="taxonomic scope" value="Bacteria"/>
</dbReference>
<dbReference type="HOGENOM" id="CLU_019624_3_1_5"/>
<dbReference type="OrthoDB" id="9805918at2"/>
<dbReference type="Proteomes" id="UP000001976">
    <property type="component" value="Chromosome"/>
</dbReference>
<dbReference type="GO" id="GO:0005737">
    <property type="term" value="C:cytoplasm"/>
    <property type="evidence" value="ECO:0007669"/>
    <property type="project" value="UniProtKB-SubCell"/>
</dbReference>
<dbReference type="GO" id="GO:0005525">
    <property type="term" value="F:GTP binding"/>
    <property type="evidence" value="ECO:0007669"/>
    <property type="project" value="UniProtKB-UniRule"/>
</dbReference>
<dbReference type="GO" id="GO:0003924">
    <property type="term" value="F:GTPase activity"/>
    <property type="evidence" value="ECO:0007669"/>
    <property type="project" value="UniProtKB-UniRule"/>
</dbReference>
<dbReference type="GO" id="GO:0046872">
    <property type="term" value="F:metal ion binding"/>
    <property type="evidence" value="ECO:0007669"/>
    <property type="project" value="UniProtKB-KW"/>
</dbReference>
<dbReference type="GO" id="GO:0030488">
    <property type="term" value="P:tRNA methylation"/>
    <property type="evidence" value="ECO:0007669"/>
    <property type="project" value="TreeGrafter"/>
</dbReference>
<dbReference type="GO" id="GO:0002098">
    <property type="term" value="P:tRNA wobble uridine modification"/>
    <property type="evidence" value="ECO:0007669"/>
    <property type="project" value="TreeGrafter"/>
</dbReference>
<dbReference type="CDD" id="cd04164">
    <property type="entry name" value="trmE"/>
    <property type="match status" value="1"/>
</dbReference>
<dbReference type="CDD" id="cd14858">
    <property type="entry name" value="TrmE_N"/>
    <property type="match status" value="1"/>
</dbReference>
<dbReference type="FunFam" id="3.30.1360.120:FF:000007">
    <property type="entry name" value="tRNA modification GTPase GTPBP3, mitochondrial"/>
    <property type="match status" value="1"/>
</dbReference>
<dbReference type="Gene3D" id="3.40.50.300">
    <property type="entry name" value="P-loop containing nucleotide triphosphate hydrolases"/>
    <property type="match status" value="1"/>
</dbReference>
<dbReference type="Gene3D" id="3.30.1360.120">
    <property type="entry name" value="Probable tRNA modification gtpase trme, domain 1"/>
    <property type="match status" value="1"/>
</dbReference>
<dbReference type="Gene3D" id="1.20.120.430">
    <property type="entry name" value="tRNA modification GTPase MnmE domain 2"/>
    <property type="match status" value="1"/>
</dbReference>
<dbReference type="HAMAP" id="MF_00379">
    <property type="entry name" value="GTPase_MnmE"/>
    <property type="match status" value="1"/>
</dbReference>
<dbReference type="InterPro" id="IPR031168">
    <property type="entry name" value="G_TrmE"/>
</dbReference>
<dbReference type="InterPro" id="IPR006073">
    <property type="entry name" value="GTP-bd"/>
</dbReference>
<dbReference type="InterPro" id="IPR018948">
    <property type="entry name" value="GTP-bd_TrmE_N"/>
</dbReference>
<dbReference type="InterPro" id="IPR004520">
    <property type="entry name" value="GTPase_MnmE"/>
</dbReference>
<dbReference type="InterPro" id="IPR027368">
    <property type="entry name" value="MnmE_dom2"/>
</dbReference>
<dbReference type="InterPro" id="IPR025867">
    <property type="entry name" value="MnmE_helical"/>
</dbReference>
<dbReference type="InterPro" id="IPR027417">
    <property type="entry name" value="P-loop_NTPase"/>
</dbReference>
<dbReference type="InterPro" id="IPR005225">
    <property type="entry name" value="Small_GTP-bd"/>
</dbReference>
<dbReference type="InterPro" id="IPR027266">
    <property type="entry name" value="TrmE/GcvT_dom1"/>
</dbReference>
<dbReference type="NCBIfam" id="TIGR00450">
    <property type="entry name" value="mnmE_trmE_thdF"/>
    <property type="match status" value="1"/>
</dbReference>
<dbReference type="NCBIfam" id="NF003661">
    <property type="entry name" value="PRK05291.1-3"/>
    <property type="match status" value="1"/>
</dbReference>
<dbReference type="NCBIfam" id="TIGR00231">
    <property type="entry name" value="small_GTP"/>
    <property type="match status" value="1"/>
</dbReference>
<dbReference type="PANTHER" id="PTHR42714">
    <property type="entry name" value="TRNA MODIFICATION GTPASE GTPBP3"/>
    <property type="match status" value="1"/>
</dbReference>
<dbReference type="PANTHER" id="PTHR42714:SF2">
    <property type="entry name" value="TRNA MODIFICATION GTPASE GTPBP3, MITOCHONDRIAL"/>
    <property type="match status" value="1"/>
</dbReference>
<dbReference type="Pfam" id="PF01926">
    <property type="entry name" value="MMR_HSR1"/>
    <property type="match status" value="1"/>
</dbReference>
<dbReference type="Pfam" id="PF12631">
    <property type="entry name" value="MnmE_helical"/>
    <property type="match status" value="1"/>
</dbReference>
<dbReference type="Pfam" id="PF10396">
    <property type="entry name" value="TrmE_N"/>
    <property type="match status" value="1"/>
</dbReference>
<dbReference type="PRINTS" id="PR00449">
    <property type="entry name" value="RASTRNSFRMNG"/>
</dbReference>
<dbReference type="SUPFAM" id="SSF52540">
    <property type="entry name" value="P-loop containing nucleoside triphosphate hydrolases"/>
    <property type="match status" value="1"/>
</dbReference>
<dbReference type="SUPFAM" id="SSF116878">
    <property type="entry name" value="TrmE connector domain"/>
    <property type="match status" value="1"/>
</dbReference>
<dbReference type="PROSITE" id="PS51709">
    <property type="entry name" value="G_TRME"/>
    <property type="match status" value="1"/>
</dbReference>
<sequence length="439" mass="47119">MLSTDTIYALSSGSLPAGVAIIRVSGPETADALVRLCGTLPPPRIATLRTIRTRNGETLDSGLVLYFPTPASFTGEDCCELQVHGGRAVVSAILDELAATGGLRHAEAGEFARRAFQNGKLDLVEVEGLADLIAAETEMQRRLAIEQSGGGQSALYAGWARRLTHSRAMIEAELDFADEDDVPGSVSAVIWEDVGRLRQEIDGHIARAGLAEIIRDGLKIVIAGEPNAGKSSLLNALARRDIAIVTEVAGTTRDVLSVDLSLAGFSVKLFDTAGLRETDELVEREGIRRARQVIADADLVLLLSEKPGHFRIDEVLPENVPVIRVATKVDRPSPSWAPSDADIFLSTRTGEGMADLLTALQSHLPDLAGRTALAMPSRKRHVDCLRQASAALERSLISSDLELRAEQLRQAGDALGRITGRVDVENLLDVIFSEFCIGK</sequence>
<evidence type="ECO:0000255" key="1">
    <source>
        <dbReference type="HAMAP-Rule" id="MF_00379"/>
    </source>
</evidence>
<feature type="chain" id="PRO_0000345885" description="tRNA modification GTPase MnmE">
    <location>
        <begin position="1"/>
        <end position="439"/>
    </location>
</feature>
<feature type="domain" description="TrmE-type G">
    <location>
        <begin position="217"/>
        <end position="365"/>
    </location>
</feature>
<feature type="binding site" evidence="1">
    <location>
        <position position="23"/>
    </location>
    <ligand>
        <name>(6S)-5-formyl-5,6,7,8-tetrahydrofolate</name>
        <dbReference type="ChEBI" id="CHEBI:57457"/>
    </ligand>
</feature>
<feature type="binding site" evidence="1">
    <location>
        <position position="80"/>
    </location>
    <ligand>
        <name>(6S)-5-formyl-5,6,7,8-tetrahydrofolate</name>
        <dbReference type="ChEBI" id="CHEBI:57457"/>
    </ligand>
</feature>
<feature type="binding site" evidence="1">
    <location>
        <position position="120"/>
    </location>
    <ligand>
        <name>(6S)-5-formyl-5,6,7,8-tetrahydrofolate</name>
        <dbReference type="ChEBI" id="CHEBI:57457"/>
    </ligand>
</feature>
<feature type="binding site" evidence="1">
    <location>
        <begin position="227"/>
        <end position="232"/>
    </location>
    <ligand>
        <name>GTP</name>
        <dbReference type="ChEBI" id="CHEBI:37565"/>
    </ligand>
</feature>
<feature type="binding site" evidence="1">
    <location>
        <position position="227"/>
    </location>
    <ligand>
        <name>K(+)</name>
        <dbReference type="ChEBI" id="CHEBI:29103"/>
    </ligand>
</feature>
<feature type="binding site" evidence="1">
    <location>
        <position position="231"/>
    </location>
    <ligand>
        <name>Mg(2+)</name>
        <dbReference type="ChEBI" id="CHEBI:18420"/>
    </ligand>
</feature>
<feature type="binding site" evidence="1">
    <location>
        <begin position="246"/>
        <end position="252"/>
    </location>
    <ligand>
        <name>GTP</name>
        <dbReference type="ChEBI" id="CHEBI:37565"/>
    </ligand>
</feature>
<feature type="binding site" evidence="1">
    <location>
        <position position="246"/>
    </location>
    <ligand>
        <name>K(+)</name>
        <dbReference type="ChEBI" id="CHEBI:29103"/>
    </ligand>
</feature>
<feature type="binding site" evidence="1">
    <location>
        <position position="248"/>
    </location>
    <ligand>
        <name>K(+)</name>
        <dbReference type="ChEBI" id="CHEBI:29103"/>
    </ligand>
</feature>
<feature type="binding site" evidence="1">
    <location>
        <position position="251"/>
    </location>
    <ligand>
        <name>K(+)</name>
        <dbReference type="ChEBI" id="CHEBI:29103"/>
    </ligand>
</feature>
<feature type="binding site" evidence="1">
    <location>
        <position position="252"/>
    </location>
    <ligand>
        <name>Mg(2+)</name>
        <dbReference type="ChEBI" id="CHEBI:18420"/>
    </ligand>
</feature>
<feature type="binding site" evidence="1">
    <location>
        <begin position="271"/>
        <end position="274"/>
    </location>
    <ligand>
        <name>GTP</name>
        <dbReference type="ChEBI" id="CHEBI:37565"/>
    </ligand>
</feature>
<feature type="binding site" evidence="1">
    <location>
        <position position="439"/>
    </location>
    <ligand>
        <name>(6S)-5-formyl-5,6,7,8-tetrahydrofolate</name>
        <dbReference type="ChEBI" id="CHEBI:57457"/>
    </ligand>
</feature>
<gene>
    <name evidence="1" type="primary">mnmE</name>
    <name evidence="1" type="synonym">trmE</name>
    <name type="ordered locus">R03338</name>
    <name type="ORF">SMc02797</name>
</gene>
<keyword id="KW-0963">Cytoplasm</keyword>
<keyword id="KW-0342">GTP-binding</keyword>
<keyword id="KW-0378">Hydrolase</keyword>
<keyword id="KW-0460">Magnesium</keyword>
<keyword id="KW-0479">Metal-binding</keyword>
<keyword id="KW-0547">Nucleotide-binding</keyword>
<keyword id="KW-0630">Potassium</keyword>
<keyword id="KW-1185">Reference proteome</keyword>
<keyword id="KW-0819">tRNA processing</keyword>
<reference key="1">
    <citation type="journal article" date="2001" name="Proc. Natl. Acad. Sci. U.S.A.">
        <title>Analysis of the chromosome sequence of the legume symbiont Sinorhizobium meliloti strain 1021.</title>
        <authorList>
            <person name="Capela D."/>
            <person name="Barloy-Hubler F."/>
            <person name="Gouzy J."/>
            <person name="Bothe G."/>
            <person name="Ampe F."/>
            <person name="Batut J."/>
            <person name="Boistard P."/>
            <person name="Becker A."/>
            <person name="Boutry M."/>
            <person name="Cadieu E."/>
            <person name="Dreano S."/>
            <person name="Gloux S."/>
            <person name="Godrie T."/>
            <person name="Goffeau A."/>
            <person name="Kahn D."/>
            <person name="Kiss E."/>
            <person name="Lelaure V."/>
            <person name="Masuy D."/>
            <person name="Pohl T."/>
            <person name="Portetelle D."/>
            <person name="Puehler A."/>
            <person name="Purnelle B."/>
            <person name="Ramsperger U."/>
            <person name="Renard C."/>
            <person name="Thebault P."/>
            <person name="Vandenbol M."/>
            <person name="Weidner S."/>
            <person name="Galibert F."/>
        </authorList>
    </citation>
    <scope>NUCLEOTIDE SEQUENCE [LARGE SCALE GENOMIC DNA]</scope>
    <source>
        <strain>1021</strain>
    </source>
</reference>
<reference key="2">
    <citation type="journal article" date="2001" name="Science">
        <title>The composite genome of the legume symbiont Sinorhizobium meliloti.</title>
        <authorList>
            <person name="Galibert F."/>
            <person name="Finan T.M."/>
            <person name="Long S.R."/>
            <person name="Puehler A."/>
            <person name="Abola P."/>
            <person name="Ampe F."/>
            <person name="Barloy-Hubler F."/>
            <person name="Barnett M.J."/>
            <person name="Becker A."/>
            <person name="Boistard P."/>
            <person name="Bothe G."/>
            <person name="Boutry M."/>
            <person name="Bowser L."/>
            <person name="Buhrmester J."/>
            <person name="Cadieu E."/>
            <person name="Capela D."/>
            <person name="Chain P."/>
            <person name="Cowie A."/>
            <person name="Davis R.W."/>
            <person name="Dreano S."/>
            <person name="Federspiel N.A."/>
            <person name="Fisher R.F."/>
            <person name="Gloux S."/>
            <person name="Godrie T."/>
            <person name="Goffeau A."/>
            <person name="Golding B."/>
            <person name="Gouzy J."/>
            <person name="Gurjal M."/>
            <person name="Hernandez-Lucas I."/>
            <person name="Hong A."/>
            <person name="Huizar L."/>
            <person name="Hyman R.W."/>
            <person name="Jones T."/>
            <person name="Kahn D."/>
            <person name="Kahn M.L."/>
            <person name="Kalman S."/>
            <person name="Keating D.H."/>
            <person name="Kiss E."/>
            <person name="Komp C."/>
            <person name="Lelaure V."/>
            <person name="Masuy D."/>
            <person name="Palm C."/>
            <person name="Peck M.C."/>
            <person name="Pohl T.M."/>
            <person name="Portetelle D."/>
            <person name="Purnelle B."/>
            <person name="Ramsperger U."/>
            <person name="Surzycki R."/>
            <person name="Thebault P."/>
            <person name="Vandenbol M."/>
            <person name="Vorhoelter F.J."/>
            <person name="Weidner S."/>
            <person name="Wells D.H."/>
            <person name="Wong K."/>
            <person name="Yeh K.-C."/>
            <person name="Batut J."/>
        </authorList>
    </citation>
    <scope>NUCLEOTIDE SEQUENCE [LARGE SCALE GENOMIC DNA]</scope>
    <source>
        <strain>1021</strain>
    </source>
</reference>
<proteinExistence type="inferred from homology"/>
<name>MNME_RHIME</name>
<organism>
    <name type="scientific">Rhizobium meliloti (strain 1021)</name>
    <name type="common">Ensifer meliloti</name>
    <name type="synonym">Sinorhizobium meliloti</name>
    <dbReference type="NCBI Taxonomy" id="266834"/>
    <lineage>
        <taxon>Bacteria</taxon>
        <taxon>Pseudomonadati</taxon>
        <taxon>Pseudomonadota</taxon>
        <taxon>Alphaproteobacteria</taxon>
        <taxon>Hyphomicrobiales</taxon>
        <taxon>Rhizobiaceae</taxon>
        <taxon>Sinorhizobium/Ensifer group</taxon>
        <taxon>Sinorhizobium</taxon>
    </lineage>
</organism>